<gene>
    <name type="primary">rpsL</name>
    <name type="synonym">strA</name>
    <name type="ordered locus">SF3360</name>
    <name type="ordered locus">S4402</name>
</gene>
<organism>
    <name type="scientific">Shigella flexneri</name>
    <dbReference type="NCBI Taxonomy" id="623"/>
    <lineage>
        <taxon>Bacteria</taxon>
        <taxon>Pseudomonadati</taxon>
        <taxon>Pseudomonadota</taxon>
        <taxon>Gammaproteobacteria</taxon>
        <taxon>Enterobacterales</taxon>
        <taxon>Enterobacteriaceae</taxon>
        <taxon>Shigella</taxon>
    </lineage>
</organism>
<protein>
    <recommendedName>
        <fullName evidence="2">Small ribosomal subunit protein uS12</fullName>
    </recommendedName>
    <alternativeName>
        <fullName>30S ribosomal protein S12</fullName>
    </alternativeName>
</protein>
<dbReference type="EMBL" id="AE005674">
    <property type="protein sequence ID" value="AAN44823.2"/>
    <property type="molecule type" value="Genomic_DNA"/>
</dbReference>
<dbReference type="EMBL" id="AE014073">
    <property type="protein sequence ID" value="AAP19354.1"/>
    <property type="molecule type" value="Genomic_DNA"/>
</dbReference>
<dbReference type="RefSeq" id="NP_709116.2">
    <property type="nucleotide sequence ID" value="NC_004337.2"/>
</dbReference>
<dbReference type="RefSeq" id="WP_000246815.1">
    <property type="nucleotide sequence ID" value="NZ_WPGW01000003.1"/>
</dbReference>
<dbReference type="SMR" id="P0A7S8"/>
<dbReference type="STRING" id="198214.SF3360"/>
<dbReference type="PaxDb" id="198214-SF3360"/>
<dbReference type="GeneID" id="1027017"/>
<dbReference type="GeneID" id="98390450"/>
<dbReference type="KEGG" id="sfl:SF3360"/>
<dbReference type="KEGG" id="sfx:S4402"/>
<dbReference type="PATRIC" id="fig|198214.7.peg.3970"/>
<dbReference type="HOGENOM" id="CLU_104295_1_2_6"/>
<dbReference type="Proteomes" id="UP000001006">
    <property type="component" value="Chromosome"/>
</dbReference>
<dbReference type="Proteomes" id="UP000002673">
    <property type="component" value="Chromosome"/>
</dbReference>
<dbReference type="GO" id="GO:0015935">
    <property type="term" value="C:small ribosomal subunit"/>
    <property type="evidence" value="ECO:0007669"/>
    <property type="project" value="InterPro"/>
</dbReference>
<dbReference type="GO" id="GO:0019843">
    <property type="term" value="F:rRNA binding"/>
    <property type="evidence" value="ECO:0007669"/>
    <property type="project" value="UniProtKB-UniRule"/>
</dbReference>
<dbReference type="GO" id="GO:0003735">
    <property type="term" value="F:structural constituent of ribosome"/>
    <property type="evidence" value="ECO:0007669"/>
    <property type="project" value="InterPro"/>
</dbReference>
<dbReference type="GO" id="GO:0000049">
    <property type="term" value="F:tRNA binding"/>
    <property type="evidence" value="ECO:0007669"/>
    <property type="project" value="UniProtKB-UniRule"/>
</dbReference>
<dbReference type="GO" id="GO:0006412">
    <property type="term" value="P:translation"/>
    <property type="evidence" value="ECO:0007669"/>
    <property type="project" value="UniProtKB-UniRule"/>
</dbReference>
<dbReference type="CDD" id="cd03368">
    <property type="entry name" value="Ribosomal_S12"/>
    <property type="match status" value="1"/>
</dbReference>
<dbReference type="FunFam" id="2.40.50.140:FF:000001">
    <property type="entry name" value="30S ribosomal protein S12"/>
    <property type="match status" value="1"/>
</dbReference>
<dbReference type="Gene3D" id="2.40.50.140">
    <property type="entry name" value="Nucleic acid-binding proteins"/>
    <property type="match status" value="1"/>
</dbReference>
<dbReference type="HAMAP" id="MF_00403_B">
    <property type="entry name" value="Ribosomal_uS12_B"/>
    <property type="match status" value="1"/>
</dbReference>
<dbReference type="InterPro" id="IPR012340">
    <property type="entry name" value="NA-bd_OB-fold"/>
</dbReference>
<dbReference type="InterPro" id="IPR006032">
    <property type="entry name" value="Ribosomal_uS12"/>
</dbReference>
<dbReference type="InterPro" id="IPR005679">
    <property type="entry name" value="Ribosomal_uS12_bac"/>
</dbReference>
<dbReference type="NCBIfam" id="TIGR00981">
    <property type="entry name" value="rpsL_bact"/>
    <property type="match status" value="1"/>
</dbReference>
<dbReference type="PANTHER" id="PTHR11652">
    <property type="entry name" value="30S RIBOSOMAL PROTEIN S12 FAMILY MEMBER"/>
    <property type="match status" value="1"/>
</dbReference>
<dbReference type="Pfam" id="PF00164">
    <property type="entry name" value="Ribosom_S12_S23"/>
    <property type="match status" value="1"/>
</dbReference>
<dbReference type="PIRSF" id="PIRSF002133">
    <property type="entry name" value="Ribosomal_S12/S23"/>
    <property type="match status" value="1"/>
</dbReference>
<dbReference type="PRINTS" id="PR01034">
    <property type="entry name" value="RIBOSOMALS12"/>
</dbReference>
<dbReference type="SUPFAM" id="SSF50249">
    <property type="entry name" value="Nucleic acid-binding proteins"/>
    <property type="match status" value="1"/>
</dbReference>
<dbReference type="PROSITE" id="PS00055">
    <property type="entry name" value="RIBOSOMAL_S12"/>
    <property type="match status" value="1"/>
</dbReference>
<feature type="initiator methionine" description="Removed" evidence="1">
    <location>
        <position position="1"/>
    </location>
</feature>
<feature type="chain" id="PRO_0000146305" description="Small ribosomal subunit protein uS12">
    <location>
        <begin position="2"/>
        <end position="124"/>
    </location>
</feature>
<feature type="modified residue" description="3-methylthioaspartic acid" evidence="1">
    <location>
        <position position="89"/>
    </location>
</feature>
<feature type="modified residue" description="N6-acetyllysine" evidence="1">
    <location>
        <position position="108"/>
    </location>
</feature>
<evidence type="ECO:0000250" key="1"/>
<evidence type="ECO:0000305" key="2"/>
<keyword id="KW-0007">Acetylation</keyword>
<keyword id="KW-0488">Methylation</keyword>
<keyword id="KW-1185">Reference proteome</keyword>
<keyword id="KW-0687">Ribonucleoprotein</keyword>
<keyword id="KW-0689">Ribosomal protein</keyword>
<keyword id="KW-0694">RNA-binding</keyword>
<keyword id="KW-0699">rRNA-binding</keyword>
<keyword id="KW-0820">tRNA-binding</keyword>
<name>RS12_SHIFL</name>
<comment type="function">
    <text evidence="1">With S4 and S5 plays an important role in translational accuracy.</text>
</comment>
<comment type="function">
    <text evidence="1">Interacts with and stabilizes bases of the 16S rRNA that are involved in tRNA selection in the A site and with the mRNA backbone. Located at the interface of the 30S and 50S subunits, it traverses the body of the 30S subunit contacting proteins on the other side and probably holding the rRNA structure together. The combined cluster of proteins S8, S12 and S17 appears to hold together the shoulder and platform of the 30S subunit (By similarity).</text>
</comment>
<comment type="subunit">
    <text evidence="1">Part of the 30S ribosomal subunit. Contacts proteins S8 and S17. May interact with IF1 in the 30S initiation complex (By similarity).</text>
</comment>
<comment type="similarity">
    <text evidence="2">Belongs to the universal ribosomal protein uS12 family.</text>
</comment>
<reference key="1">
    <citation type="journal article" date="2002" name="Nucleic Acids Res.">
        <title>Genome sequence of Shigella flexneri 2a: insights into pathogenicity through comparison with genomes of Escherichia coli K12 and O157.</title>
        <authorList>
            <person name="Jin Q."/>
            <person name="Yuan Z."/>
            <person name="Xu J."/>
            <person name="Wang Y."/>
            <person name="Shen Y."/>
            <person name="Lu W."/>
            <person name="Wang J."/>
            <person name="Liu H."/>
            <person name="Yang J."/>
            <person name="Yang F."/>
            <person name="Zhang X."/>
            <person name="Zhang J."/>
            <person name="Yang G."/>
            <person name="Wu H."/>
            <person name="Qu D."/>
            <person name="Dong J."/>
            <person name="Sun L."/>
            <person name="Xue Y."/>
            <person name="Zhao A."/>
            <person name="Gao Y."/>
            <person name="Zhu J."/>
            <person name="Kan B."/>
            <person name="Ding K."/>
            <person name="Chen S."/>
            <person name="Cheng H."/>
            <person name="Yao Z."/>
            <person name="He B."/>
            <person name="Chen R."/>
            <person name="Ma D."/>
            <person name="Qiang B."/>
            <person name="Wen Y."/>
            <person name="Hou Y."/>
            <person name="Yu J."/>
        </authorList>
    </citation>
    <scope>NUCLEOTIDE SEQUENCE [LARGE SCALE GENOMIC DNA]</scope>
    <source>
        <strain>301 / Serotype 2a</strain>
    </source>
</reference>
<reference key="2">
    <citation type="journal article" date="2003" name="Infect. Immun.">
        <title>Complete genome sequence and comparative genomics of Shigella flexneri serotype 2a strain 2457T.</title>
        <authorList>
            <person name="Wei J."/>
            <person name="Goldberg M.B."/>
            <person name="Burland V."/>
            <person name="Venkatesan M.M."/>
            <person name="Deng W."/>
            <person name="Fournier G."/>
            <person name="Mayhew G.F."/>
            <person name="Plunkett G. III"/>
            <person name="Rose D.J."/>
            <person name="Darling A."/>
            <person name="Mau B."/>
            <person name="Perna N.T."/>
            <person name="Payne S.M."/>
            <person name="Runyen-Janecky L.J."/>
            <person name="Zhou S."/>
            <person name="Schwartz D.C."/>
            <person name="Blattner F.R."/>
        </authorList>
    </citation>
    <scope>NUCLEOTIDE SEQUENCE [LARGE SCALE GENOMIC DNA]</scope>
    <source>
        <strain>ATCC 700930 / 2457T / Serotype 2a</strain>
    </source>
</reference>
<sequence length="124" mass="13737">MATVNQLVRKPRARKVAKSNVPALEACPQKRGVCTRVYTTTPKKPNSALRKVCRVRLTNGFEVTSYIGGEGHNLQEHSVILIRGGRVKDLPGVRYHTVRGALDCSGVKDRKQARSKYGVKRPKA</sequence>
<accession>P0A7S8</accession>
<accession>P02367</accession>
<accession>Q9F5N3</accession>
<proteinExistence type="inferred from homology"/>